<organism>
    <name type="scientific">Pseudomonas syringae pv. tomato (strain ATCC BAA-871 / DC3000)</name>
    <dbReference type="NCBI Taxonomy" id="223283"/>
    <lineage>
        <taxon>Bacteria</taxon>
        <taxon>Pseudomonadati</taxon>
        <taxon>Pseudomonadota</taxon>
        <taxon>Gammaproteobacteria</taxon>
        <taxon>Pseudomonadales</taxon>
        <taxon>Pseudomonadaceae</taxon>
        <taxon>Pseudomonas</taxon>
    </lineage>
</organism>
<keyword id="KW-0548">Nucleotidyltransferase</keyword>
<keyword id="KW-1185">Reference proteome</keyword>
<keyword id="KW-0694">RNA-binding</keyword>
<keyword id="KW-0698">rRNA processing</keyword>
<keyword id="KW-0808">Transferase</keyword>
<keyword id="KW-0819">tRNA processing</keyword>
<keyword id="KW-0820">tRNA-binding</keyword>
<proteinExistence type="inferred from homology"/>
<feature type="chain" id="PRO_0000139926" description="Ribonuclease PH">
    <location>
        <begin position="1"/>
        <end position="240"/>
    </location>
</feature>
<feature type="binding site" evidence="1">
    <location>
        <position position="87"/>
    </location>
    <ligand>
        <name>phosphate</name>
        <dbReference type="ChEBI" id="CHEBI:43474"/>
        <note>substrate</note>
    </ligand>
</feature>
<feature type="binding site" evidence="1">
    <location>
        <begin position="125"/>
        <end position="127"/>
    </location>
    <ligand>
        <name>phosphate</name>
        <dbReference type="ChEBI" id="CHEBI:43474"/>
        <note>substrate</note>
    </ligand>
</feature>
<gene>
    <name evidence="1" type="primary">rph</name>
    <name type="ordered locus">PSPTO_0077</name>
</gene>
<dbReference type="EC" id="2.7.7.56" evidence="1"/>
<dbReference type="EMBL" id="AE016853">
    <property type="protein sequence ID" value="AAO53631.1"/>
    <property type="molecule type" value="Genomic_DNA"/>
</dbReference>
<dbReference type="RefSeq" id="NP_789936.1">
    <property type="nucleotide sequence ID" value="NC_004578.1"/>
</dbReference>
<dbReference type="RefSeq" id="WP_005769567.1">
    <property type="nucleotide sequence ID" value="NC_004578.1"/>
</dbReference>
<dbReference type="SMR" id="Q88BE0"/>
<dbReference type="STRING" id="223283.PSPTO_0077"/>
<dbReference type="GeneID" id="1181685"/>
<dbReference type="KEGG" id="pst:PSPTO_0077"/>
<dbReference type="PATRIC" id="fig|223283.9.peg.81"/>
<dbReference type="eggNOG" id="COG0689">
    <property type="taxonomic scope" value="Bacteria"/>
</dbReference>
<dbReference type="HOGENOM" id="CLU_050858_0_0_6"/>
<dbReference type="OrthoDB" id="9802265at2"/>
<dbReference type="PhylomeDB" id="Q88BE0"/>
<dbReference type="Proteomes" id="UP000002515">
    <property type="component" value="Chromosome"/>
</dbReference>
<dbReference type="GO" id="GO:0000175">
    <property type="term" value="F:3'-5'-RNA exonuclease activity"/>
    <property type="evidence" value="ECO:0007669"/>
    <property type="project" value="UniProtKB-UniRule"/>
</dbReference>
<dbReference type="GO" id="GO:0000049">
    <property type="term" value="F:tRNA binding"/>
    <property type="evidence" value="ECO:0007669"/>
    <property type="project" value="UniProtKB-UniRule"/>
</dbReference>
<dbReference type="GO" id="GO:0009022">
    <property type="term" value="F:tRNA nucleotidyltransferase activity"/>
    <property type="evidence" value="ECO:0007669"/>
    <property type="project" value="UniProtKB-UniRule"/>
</dbReference>
<dbReference type="GO" id="GO:0016075">
    <property type="term" value="P:rRNA catabolic process"/>
    <property type="evidence" value="ECO:0007669"/>
    <property type="project" value="UniProtKB-UniRule"/>
</dbReference>
<dbReference type="GO" id="GO:0006364">
    <property type="term" value="P:rRNA processing"/>
    <property type="evidence" value="ECO:0007669"/>
    <property type="project" value="UniProtKB-KW"/>
</dbReference>
<dbReference type="GO" id="GO:0008033">
    <property type="term" value="P:tRNA processing"/>
    <property type="evidence" value="ECO:0007669"/>
    <property type="project" value="UniProtKB-UniRule"/>
</dbReference>
<dbReference type="CDD" id="cd11362">
    <property type="entry name" value="RNase_PH_bact"/>
    <property type="match status" value="1"/>
</dbReference>
<dbReference type="FunFam" id="3.30.230.70:FF:000003">
    <property type="entry name" value="Ribonuclease PH"/>
    <property type="match status" value="1"/>
</dbReference>
<dbReference type="Gene3D" id="3.30.230.70">
    <property type="entry name" value="GHMP Kinase, N-terminal domain"/>
    <property type="match status" value="1"/>
</dbReference>
<dbReference type="HAMAP" id="MF_00564">
    <property type="entry name" value="RNase_PH"/>
    <property type="match status" value="1"/>
</dbReference>
<dbReference type="InterPro" id="IPR001247">
    <property type="entry name" value="ExoRNase_PH_dom1"/>
</dbReference>
<dbReference type="InterPro" id="IPR015847">
    <property type="entry name" value="ExoRNase_PH_dom2"/>
</dbReference>
<dbReference type="InterPro" id="IPR036345">
    <property type="entry name" value="ExoRNase_PH_dom2_sf"/>
</dbReference>
<dbReference type="InterPro" id="IPR027408">
    <property type="entry name" value="PNPase/RNase_PH_dom_sf"/>
</dbReference>
<dbReference type="InterPro" id="IPR020568">
    <property type="entry name" value="Ribosomal_Su5_D2-typ_SF"/>
</dbReference>
<dbReference type="InterPro" id="IPR050080">
    <property type="entry name" value="RNase_PH"/>
</dbReference>
<dbReference type="InterPro" id="IPR002381">
    <property type="entry name" value="RNase_PH_bac-type"/>
</dbReference>
<dbReference type="InterPro" id="IPR018336">
    <property type="entry name" value="RNase_PH_CS"/>
</dbReference>
<dbReference type="NCBIfam" id="TIGR01966">
    <property type="entry name" value="RNasePH"/>
    <property type="match status" value="1"/>
</dbReference>
<dbReference type="PANTHER" id="PTHR11953">
    <property type="entry name" value="EXOSOME COMPLEX COMPONENT"/>
    <property type="match status" value="1"/>
</dbReference>
<dbReference type="PANTHER" id="PTHR11953:SF0">
    <property type="entry name" value="EXOSOME COMPLEX COMPONENT RRP41"/>
    <property type="match status" value="1"/>
</dbReference>
<dbReference type="Pfam" id="PF01138">
    <property type="entry name" value="RNase_PH"/>
    <property type="match status" value="1"/>
</dbReference>
<dbReference type="Pfam" id="PF03725">
    <property type="entry name" value="RNase_PH_C"/>
    <property type="match status" value="1"/>
</dbReference>
<dbReference type="SUPFAM" id="SSF55666">
    <property type="entry name" value="Ribonuclease PH domain 2-like"/>
    <property type="match status" value="1"/>
</dbReference>
<dbReference type="SUPFAM" id="SSF54211">
    <property type="entry name" value="Ribosomal protein S5 domain 2-like"/>
    <property type="match status" value="1"/>
</dbReference>
<dbReference type="PROSITE" id="PS01277">
    <property type="entry name" value="RIBONUCLEASE_PH"/>
    <property type="match status" value="1"/>
</dbReference>
<accession>Q88BE0</accession>
<comment type="function">
    <text evidence="1">Phosphorolytic 3'-5' exoribonuclease that plays an important role in tRNA 3'-end maturation. Removes nucleotide residues following the 3'-CCA terminus of tRNAs; can also add nucleotides to the ends of RNA molecules by using nucleoside diphosphates as substrates, but this may not be physiologically important. Probably plays a role in initiation of 16S rRNA degradation (leading to ribosome degradation) during starvation.</text>
</comment>
<comment type="catalytic activity">
    <reaction evidence="1">
        <text>tRNA(n+1) + phosphate = tRNA(n) + a ribonucleoside 5'-diphosphate</text>
        <dbReference type="Rhea" id="RHEA:10628"/>
        <dbReference type="Rhea" id="RHEA-COMP:17343"/>
        <dbReference type="Rhea" id="RHEA-COMP:17344"/>
        <dbReference type="ChEBI" id="CHEBI:43474"/>
        <dbReference type="ChEBI" id="CHEBI:57930"/>
        <dbReference type="ChEBI" id="CHEBI:173114"/>
        <dbReference type="EC" id="2.7.7.56"/>
    </reaction>
</comment>
<comment type="subunit">
    <text evidence="1">Homohexameric ring arranged as a trimer of dimers.</text>
</comment>
<comment type="similarity">
    <text evidence="1">Belongs to the RNase PH family.</text>
</comment>
<name>RNPH_PSESM</name>
<reference key="1">
    <citation type="journal article" date="2003" name="Proc. Natl. Acad. Sci. U.S.A.">
        <title>The complete genome sequence of the Arabidopsis and tomato pathogen Pseudomonas syringae pv. tomato DC3000.</title>
        <authorList>
            <person name="Buell C.R."/>
            <person name="Joardar V."/>
            <person name="Lindeberg M."/>
            <person name="Selengut J."/>
            <person name="Paulsen I.T."/>
            <person name="Gwinn M.L."/>
            <person name="Dodson R.J."/>
            <person name="DeBoy R.T."/>
            <person name="Durkin A.S."/>
            <person name="Kolonay J.F."/>
            <person name="Madupu R."/>
            <person name="Daugherty S.C."/>
            <person name="Brinkac L.M."/>
            <person name="Beanan M.J."/>
            <person name="Haft D.H."/>
            <person name="Nelson W.C."/>
            <person name="Davidsen T.M."/>
            <person name="Zafar N."/>
            <person name="Zhou L."/>
            <person name="Liu J."/>
            <person name="Yuan Q."/>
            <person name="Khouri H.M."/>
            <person name="Fedorova N.B."/>
            <person name="Tran B."/>
            <person name="Russell D."/>
            <person name="Berry K.J."/>
            <person name="Utterback T.R."/>
            <person name="Van Aken S.E."/>
            <person name="Feldblyum T.V."/>
            <person name="D'Ascenzo M."/>
            <person name="Deng W.-L."/>
            <person name="Ramos A.R."/>
            <person name="Alfano J.R."/>
            <person name="Cartinhour S."/>
            <person name="Chatterjee A.K."/>
            <person name="Delaney T.P."/>
            <person name="Lazarowitz S.G."/>
            <person name="Martin G.B."/>
            <person name="Schneider D.J."/>
            <person name="Tang X."/>
            <person name="Bender C.L."/>
            <person name="White O."/>
            <person name="Fraser C.M."/>
            <person name="Collmer A."/>
        </authorList>
    </citation>
    <scope>NUCLEOTIDE SEQUENCE [LARGE SCALE GENOMIC DNA]</scope>
    <source>
        <strain>ATCC BAA-871 / DC3000</strain>
    </source>
</reference>
<protein>
    <recommendedName>
        <fullName evidence="1">Ribonuclease PH</fullName>
        <shortName evidence="1">RNase PH</shortName>
        <ecNumber evidence="1">2.7.7.56</ecNumber>
    </recommendedName>
    <alternativeName>
        <fullName evidence="1">tRNA nucleotidyltransferase</fullName>
    </alternativeName>
</protein>
<sequence length="240" mass="25721">MKRPSGRAADQLRSIRITRNYTKHAEGSVLVEFGDTKVICTVSVENGVPRFLKGQGQGWLTAEYGMLPRATGERNQREASRGKQGGRTLEIQRLIGRSLRAALDMSKLGDVTLYVDCDVIQADGGTRTASITGAMVALADALKVIKKRGGLKGGDPLKQMIAAVSVGMYQGEPVLDLDYLEDSAAETDLNVVMTSAGGFIEVQGTAEGAPFQPEELNAMLALAQKGMTELFEMQRAALAD</sequence>
<evidence type="ECO:0000255" key="1">
    <source>
        <dbReference type="HAMAP-Rule" id="MF_00564"/>
    </source>
</evidence>